<keyword id="KW-0963">Cytoplasm</keyword>
<keyword id="KW-0255">Endonuclease</keyword>
<keyword id="KW-0378">Hydrolase</keyword>
<keyword id="KW-0460">Magnesium</keyword>
<keyword id="KW-0479">Metal-binding</keyword>
<keyword id="KW-0540">Nuclease</keyword>
<keyword id="KW-1185">Reference proteome</keyword>
<keyword id="KW-0690">Ribosome biogenesis</keyword>
<keyword id="KW-0694">RNA-binding</keyword>
<keyword id="KW-0698">rRNA processing</keyword>
<keyword id="KW-0699">rRNA-binding</keyword>
<gene>
    <name evidence="1" type="primary">rnmV</name>
    <name type="synonym">ygiK</name>
    <name type="ordered locus">LL0689</name>
    <name type="ORF">L88730</name>
</gene>
<feature type="chain" id="PRO_0000416753" description="Ribonuclease M5">
    <location>
        <begin position="1"/>
        <end position="206"/>
    </location>
</feature>
<feature type="domain" description="Toprim" evidence="1">
    <location>
        <begin position="8"/>
        <end position="91"/>
    </location>
</feature>
<feature type="binding site" evidence="1">
    <location>
        <position position="14"/>
    </location>
    <ligand>
        <name>Mg(2+)</name>
        <dbReference type="ChEBI" id="CHEBI:18420"/>
        <label>1</label>
        <note>catalytic</note>
    </ligand>
</feature>
<feature type="binding site" evidence="1">
    <location>
        <position position="60"/>
    </location>
    <ligand>
        <name>Mg(2+)</name>
        <dbReference type="ChEBI" id="CHEBI:18420"/>
        <label>1</label>
        <note>catalytic</note>
    </ligand>
</feature>
<feature type="binding site" evidence="1">
    <location>
        <position position="60"/>
    </location>
    <ligand>
        <name>Mg(2+)</name>
        <dbReference type="ChEBI" id="CHEBI:18420"/>
        <label>2</label>
    </ligand>
</feature>
<feature type="binding site" evidence="1">
    <location>
        <position position="62"/>
    </location>
    <ligand>
        <name>Mg(2+)</name>
        <dbReference type="ChEBI" id="CHEBI:18420"/>
        <label>2</label>
    </ligand>
</feature>
<proteinExistence type="inferred from homology"/>
<reference key="1">
    <citation type="journal article" date="2001" name="Genome Res.">
        <title>The complete genome sequence of the lactic acid bacterium Lactococcus lactis ssp. lactis IL1403.</title>
        <authorList>
            <person name="Bolotin A."/>
            <person name="Wincker P."/>
            <person name="Mauger S."/>
            <person name="Jaillon O."/>
            <person name="Malarme K."/>
            <person name="Weissenbach J."/>
            <person name="Ehrlich S.D."/>
            <person name="Sorokin A."/>
        </authorList>
    </citation>
    <scope>NUCLEOTIDE SEQUENCE [LARGE SCALE GENOMIC DNA]</scope>
    <source>
        <strain>IL1403</strain>
    </source>
</reference>
<protein>
    <recommendedName>
        <fullName evidence="1">Ribonuclease M5</fullName>
        <ecNumber evidence="1">3.1.26.8</ecNumber>
    </recommendedName>
    <alternativeName>
        <fullName evidence="1">RNase M5</fullName>
    </alternativeName>
    <alternativeName>
        <fullName evidence="1">Ribosomal RNA terminal maturase M5</fullName>
    </alternativeName>
</protein>
<dbReference type="EC" id="3.1.26.8" evidence="1"/>
<dbReference type="EMBL" id="AE005176">
    <property type="protein sequence ID" value="AAK04787.1"/>
    <property type="molecule type" value="Genomic_DNA"/>
</dbReference>
<dbReference type="PIR" id="A86711">
    <property type="entry name" value="A86711"/>
</dbReference>
<dbReference type="RefSeq" id="NP_266845.1">
    <property type="nucleotide sequence ID" value="NC_002662.1"/>
</dbReference>
<dbReference type="RefSeq" id="WP_003129620.1">
    <property type="nucleotide sequence ID" value="NC_002662.1"/>
</dbReference>
<dbReference type="SMR" id="Q9CHN9"/>
<dbReference type="PaxDb" id="272623-L88730"/>
<dbReference type="EnsemblBacteria" id="AAK04787">
    <property type="protein sequence ID" value="AAK04787"/>
    <property type="gene ID" value="L88730"/>
</dbReference>
<dbReference type="KEGG" id="lla:L88730"/>
<dbReference type="PATRIC" id="fig|272623.7.peg.740"/>
<dbReference type="eggNOG" id="COG1658">
    <property type="taxonomic scope" value="Bacteria"/>
</dbReference>
<dbReference type="HOGENOM" id="CLU_109405_0_0_9"/>
<dbReference type="OrthoDB" id="9791329at2"/>
<dbReference type="Proteomes" id="UP000002196">
    <property type="component" value="Chromosome"/>
</dbReference>
<dbReference type="GO" id="GO:0005737">
    <property type="term" value="C:cytoplasm"/>
    <property type="evidence" value="ECO:0007669"/>
    <property type="project" value="UniProtKB-SubCell"/>
</dbReference>
<dbReference type="GO" id="GO:0046872">
    <property type="term" value="F:metal ion binding"/>
    <property type="evidence" value="ECO:0007669"/>
    <property type="project" value="UniProtKB-KW"/>
</dbReference>
<dbReference type="GO" id="GO:0043822">
    <property type="term" value="F:ribonuclease M5 activity"/>
    <property type="evidence" value="ECO:0007669"/>
    <property type="project" value="UniProtKB-UniRule"/>
</dbReference>
<dbReference type="GO" id="GO:0019843">
    <property type="term" value="F:rRNA binding"/>
    <property type="evidence" value="ECO:0007669"/>
    <property type="project" value="UniProtKB-KW"/>
</dbReference>
<dbReference type="GO" id="GO:0006364">
    <property type="term" value="P:rRNA processing"/>
    <property type="evidence" value="ECO:0007669"/>
    <property type="project" value="UniProtKB-UniRule"/>
</dbReference>
<dbReference type="CDD" id="cd01027">
    <property type="entry name" value="TOPRIM_RNase_M5_like"/>
    <property type="match status" value="1"/>
</dbReference>
<dbReference type="FunFam" id="3.40.1360.10:FF:000006">
    <property type="entry name" value="Ribonuclease M5"/>
    <property type="match status" value="1"/>
</dbReference>
<dbReference type="Gene3D" id="3.40.1360.10">
    <property type="match status" value="1"/>
</dbReference>
<dbReference type="HAMAP" id="MF_01469">
    <property type="entry name" value="RNase_M5"/>
    <property type="match status" value="1"/>
</dbReference>
<dbReference type="InterPro" id="IPR004466">
    <property type="entry name" value="RNase_M5"/>
</dbReference>
<dbReference type="InterPro" id="IPR025156">
    <property type="entry name" value="RNase_M5_C"/>
</dbReference>
<dbReference type="InterPro" id="IPR006171">
    <property type="entry name" value="TOPRIM_dom"/>
</dbReference>
<dbReference type="InterPro" id="IPR034141">
    <property type="entry name" value="TOPRIM_RNase_M5-like"/>
</dbReference>
<dbReference type="NCBIfam" id="TIGR00334">
    <property type="entry name" value="5S_RNA_mat_M5"/>
    <property type="match status" value="1"/>
</dbReference>
<dbReference type="PANTHER" id="PTHR39156">
    <property type="entry name" value="RIBONUCLEASE M5"/>
    <property type="match status" value="1"/>
</dbReference>
<dbReference type="PANTHER" id="PTHR39156:SF1">
    <property type="entry name" value="RIBONUCLEASE M5"/>
    <property type="match status" value="1"/>
</dbReference>
<dbReference type="Pfam" id="PF13331">
    <property type="entry name" value="DUF4093"/>
    <property type="match status" value="1"/>
</dbReference>
<dbReference type="Pfam" id="PF01751">
    <property type="entry name" value="Toprim"/>
    <property type="match status" value="1"/>
</dbReference>
<dbReference type="SMART" id="SM00493">
    <property type="entry name" value="TOPRIM"/>
    <property type="match status" value="1"/>
</dbReference>
<dbReference type="SUPFAM" id="SSF110455">
    <property type="entry name" value="Toprim domain"/>
    <property type="match status" value="1"/>
</dbReference>
<dbReference type="PROSITE" id="PS50880">
    <property type="entry name" value="TOPRIM"/>
    <property type="match status" value="1"/>
</dbReference>
<organism>
    <name type="scientific">Lactococcus lactis subsp. lactis (strain IL1403)</name>
    <name type="common">Streptococcus lactis</name>
    <dbReference type="NCBI Taxonomy" id="272623"/>
    <lineage>
        <taxon>Bacteria</taxon>
        <taxon>Bacillati</taxon>
        <taxon>Bacillota</taxon>
        <taxon>Bacilli</taxon>
        <taxon>Lactobacillales</taxon>
        <taxon>Streptococcaceae</taxon>
        <taxon>Lactococcus</taxon>
    </lineage>
</organism>
<name>RNM5_LACLA</name>
<comment type="function">
    <text evidence="1">Required for correct processing of both the 5' and 3' ends of 5S rRNA precursor. Cleaves both sides of a double-stranded region yielding mature 5S rRNA in one step.</text>
</comment>
<comment type="catalytic activity">
    <reaction evidence="1">
        <text>Endonucleolytic cleavage of RNA, removing 21 and 42 nucleotides, respectively, from the 5'- and 3'-termini of a 5S-rRNA precursor.</text>
        <dbReference type="EC" id="3.1.26.8"/>
    </reaction>
</comment>
<comment type="cofactor">
    <cofactor evidence="1">
        <name>Mg(2+)</name>
        <dbReference type="ChEBI" id="CHEBI:18420"/>
    </cofactor>
    <text evidence="1">Binds two Mg(2+) per subunit.</text>
</comment>
<comment type="subcellular location">
    <subcellularLocation>
        <location evidence="1">Cytoplasm</location>
    </subcellularLocation>
</comment>
<comment type="similarity">
    <text evidence="1">Belongs to the ribonuclease M5 family.</text>
</comment>
<accession>Q9CHN9</accession>
<evidence type="ECO:0000255" key="1">
    <source>
        <dbReference type="HAMAP-Rule" id="MF_01469"/>
    </source>
</evidence>
<sequence>MVEKQKINEVIVVEGRDDTANLKRYFDCETYETGGSSIDDRDLERLKRLEDKRGIIVFTDPDFQGERIRKIIMQAVPNAKHAFLNRDEARPKGKGSLGVEHANFEALNQALAEVFGGEKVTDEFGSAKTQEPSSDRSSVSKKELLTELTQTDLMSFGLVMAADSRKRREFLCEQLRIGYANGKQIKKRLNMFKITKEQIENVMKNY</sequence>